<proteinExistence type="inferred from homology"/>
<accession>Q3ZY20</accession>
<organism>
    <name type="scientific">Dehalococcoides mccartyi (strain CBDB1)</name>
    <dbReference type="NCBI Taxonomy" id="255470"/>
    <lineage>
        <taxon>Bacteria</taxon>
        <taxon>Bacillati</taxon>
        <taxon>Chloroflexota</taxon>
        <taxon>Dehalococcoidia</taxon>
        <taxon>Dehalococcoidales</taxon>
        <taxon>Dehalococcoidaceae</taxon>
        <taxon>Dehalococcoides</taxon>
    </lineage>
</organism>
<gene>
    <name evidence="1" type="primary">ileS</name>
    <name type="ordered locus">cbdbA1012</name>
</gene>
<feature type="chain" id="PRO_0000098541" description="Isoleucine--tRNA ligase">
    <location>
        <begin position="1"/>
        <end position="1014"/>
    </location>
</feature>
<feature type="short sequence motif" description="'HIGH' region">
    <location>
        <begin position="48"/>
        <end position="58"/>
    </location>
</feature>
<feature type="short sequence motif" description="'KMSKS' region">
    <location>
        <begin position="628"/>
        <end position="632"/>
    </location>
</feature>
<feature type="binding site" evidence="1">
    <location>
        <position position="631"/>
    </location>
    <ligand>
        <name>ATP</name>
        <dbReference type="ChEBI" id="CHEBI:30616"/>
    </ligand>
</feature>
<name>SYI_DEHMC</name>
<protein>
    <recommendedName>
        <fullName evidence="1">Isoleucine--tRNA ligase</fullName>
        <ecNumber evidence="1">6.1.1.5</ecNumber>
    </recommendedName>
    <alternativeName>
        <fullName evidence="1">Isoleucyl-tRNA synthetase</fullName>
        <shortName evidence="1">IleRS</shortName>
    </alternativeName>
</protein>
<dbReference type="EC" id="6.1.1.5" evidence="1"/>
<dbReference type="EMBL" id="AJ965256">
    <property type="protein sequence ID" value="CAI83123.1"/>
    <property type="molecule type" value="Genomic_DNA"/>
</dbReference>
<dbReference type="RefSeq" id="WP_011309474.1">
    <property type="nucleotide sequence ID" value="NC_007356.1"/>
</dbReference>
<dbReference type="SMR" id="Q3ZY20"/>
<dbReference type="KEGG" id="deh:cbdbA1012"/>
<dbReference type="HOGENOM" id="CLU_001493_1_1_0"/>
<dbReference type="Proteomes" id="UP000000433">
    <property type="component" value="Chromosome"/>
</dbReference>
<dbReference type="GO" id="GO:0005737">
    <property type="term" value="C:cytoplasm"/>
    <property type="evidence" value="ECO:0007669"/>
    <property type="project" value="UniProtKB-SubCell"/>
</dbReference>
<dbReference type="GO" id="GO:0002161">
    <property type="term" value="F:aminoacyl-tRNA deacylase activity"/>
    <property type="evidence" value="ECO:0007669"/>
    <property type="project" value="InterPro"/>
</dbReference>
<dbReference type="GO" id="GO:0005524">
    <property type="term" value="F:ATP binding"/>
    <property type="evidence" value="ECO:0007669"/>
    <property type="project" value="UniProtKB-UniRule"/>
</dbReference>
<dbReference type="GO" id="GO:0004822">
    <property type="term" value="F:isoleucine-tRNA ligase activity"/>
    <property type="evidence" value="ECO:0007669"/>
    <property type="project" value="UniProtKB-UniRule"/>
</dbReference>
<dbReference type="GO" id="GO:0000049">
    <property type="term" value="F:tRNA binding"/>
    <property type="evidence" value="ECO:0007669"/>
    <property type="project" value="InterPro"/>
</dbReference>
<dbReference type="GO" id="GO:0008270">
    <property type="term" value="F:zinc ion binding"/>
    <property type="evidence" value="ECO:0007669"/>
    <property type="project" value="UniProtKB-UniRule"/>
</dbReference>
<dbReference type="GO" id="GO:0006428">
    <property type="term" value="P:isoleucyl-tRNA aminoacylation"/>
    <property type="evidence" value="ECO:0007669"/>
    <property type="project" value="UniProtKB-UniRule"/>
</dbReference>
<dbReference type="CDD" id="cd07961">
    <property type="entry name" value="Anticodon_Ia_Ile_ABEc"/>
    <property type="match status" value="1"/>
</dbReference>
<dbReference type="CDD" id="cd00818">
    <property type="entry name" value="IleRS_core"/>
    <property type="match status" value="1"/>
</dbReference>
<dbReference type="FunFam" id="3.40.50.620:FF:000063">
    <property type="entry name" value="Isoleucine--tRNA ligase"/>
    <property type="match status" value="1"/>
</dbReference>
<dbReference type="FunFam" id="3.40.50.620:FF:000075">
    <property type="entry name" value="Isoleucine--tRNA ligase"/>
    <property type="match status" value="1"/>
</dbReference>
<dbReference type="Gene3D" id="3.40.50.620">
    <property type="entry name" value="HUPs"/>
    <property type="match status" value="2"/>
</dbReference>
<dbReference type="Gene3D" id="1.10.730.10">
    <property type="entry name" value="Isoleucyl-tRNA Synthetase, Domain 1"/>
    <property type="match status" value="1"/>
</dbReference>
<dbReference type="HAMAP" id="MF_02003">
    <property type="entry name" value="Ile_tRNA_synth_type2"/>
    <property type="match status" value="1"/>
</dbReference>
<dbReference type="InterPro" id="IPR002300">
    <property type="entry name" value="aa-tRNA-synth_Ia"/>
</dbReference>
<dbReference type="InterPro" id="IPR033709">
    <property type="entry name" value="Anticodon_Ile_ABEc"/>
</dbReference>
<dbReference type="InterPro" id="IPR002301">
    <property type="entry name" value="Ile-tRNA-ligase"/>
</dbReference>
<dbReference type="InterPro" id="IPR023586">
    <property type="entry name" value="Ile-tRNA-ligase_type2"/>
</dbReference>
<dbReference type="InterPro" id="IPR013155">
    <property type="entry name" value="M/V/L/I-tRNA-synth_anticd-bd"/>
</dbReference>
<dbReference type="InterPro" id="IPR014729">
    <property type="entry name" value="Rossmann-like_a/b/a_fold"/>
</dbReference>
<dbReference type="InterPro" id="IPR009080">
    <property type="entry name" value="tRNAsynth_Ia_anticodon-bd"/>
</dbReference>
<dbReference type="InterPro" id="IPR009008">
    <property type="entry name" value="Val/Leu/Ile-tRNA-synth_edit"/>
</dbReference>
<dbReference type="NCBIfam" id="TIGR00392">
    <property type="entry name" value="ileS"/>
    <property type="match status" value="1"/>
</dbReference>
<dbReference type="PANTHER" id="PTHR42780:SF1">
    <property type="entry name" value="ISOLEUCINE--TRNA LIGASE, CYTOPLASMIC"/>
    <property type="match status" value="1"/>
</dbReference>
<dbReference type="PANTHER" id="PTHR42780">
    <property type="entry name" value="SOLEUCYL-TRNA SYNTHETASE"/>
    <property type="match status" value="1"/>
</dbReference>
<dbReference type="Pfam" id="PF08264">
    <property type="entry name" value="Anticodon_1"/>
    <property type="match status" value="1"/>
</dbReference>
<dbReference type="Pfam" id="PF19302">
    <property type="entry name" value="DUF5915"/>
    <property type="match status" value="1"/>
</dbReference>
<dbReference type="Pfam" id="PF00133">
    <property type="entry name" value="tRNA-synt_1"/>
    <property type="match status" value="1"/>
</dbReference>
<dbReference type="PRINTS" id="PR00984">
    <property type="entry name" value="TRNASYNTHILE"/>
</dbReference>
<dbReference type="SUPFAM" id="SSF47323">
    <property type="entry name" value="Anticodon-binding domain of a subclass of class I aminoacyl-tRNA synthetases"/>
    <property type="match status" value="1"/>
</dbReference>
<dbReference type="SUPFAM" id="SSF52374">
    <property type="entry name" value="Nucleotidylyl transferase"/>
    <property type="match status" value="1"/>
</dbReference>
<dbReference type="SUPFAM" id="SSF50677">
    <property type="entry name" value="ValRS/IleRS/LeuRS editing domain"/>
    <property type="match status" value="1"/>
</dbReference>
<comment type="function">
    <text evidence="1">Catalyzes the attachment of isoleucine to tRNA(Ile). As IleRS can inadvertently accommodate and process structurally similar amino acids such as valine, to avoid such errors it has two additional distinct tRNA(Ile)-dependent editing activities. One activity is designated as 'pretransfer' editing and involves the hydrolysis of activated Val-AMP. The other activity is designated 'posttransfer' editing and involves deacylation of mischarged Val-tRNA(Ile).</text>
</comment>
<comment type="catalytic activity">
    <reaction evidence="1">
        <text>tRNA(Ile) + L-isoleucine + ATP = L-isoleucyl-tRNA(Ile) + AMP + diphosphate</text>
        <dbReference type="Rhea" id="RHEA:11060"/>
        <dbReference type="Rhea" id="RHEA-COMP:9666"/>
        <dbReference type="Rhea" id="RHEA-COMP:9695"/>
        <dbReference type="ChEBI" id="CHEBI:30616"/>
        <dbReference type="ChEBI" id="CHEBI:33019"/>
        <dbReference type="ChEBI" id="CHEBI:58045"/>
        <dbReference type="ChEBI" id="CHEBI:78442"/>
        <dbReference type="ChEBI" id="CHEBI:78528"/>
        <dbReference type="ChEBI" id="CHEBI:456215"/>
        <dbReference type="EC" id="6.1.1.5"/>
    </reaction>
</comment>
<comment type="cofactor">
    <cofactor evidence="1">
        <name>Zn(2+)</name>
        <dbReference type="ChEBI" id="CHEBI:29105"/>
    </cofactor>
</comment>
<comment type="subunit">
    <text evidence="1">Monomer.</text>
</comment>
<comment type="subcellular location">
    <subcellularLocation>
        <location evidence="1">Cytoplasm</location>
    </subcellularLocation>
</comment>
<comment type="domain">
    <text evidence="1">IleRS has two distinct active sites: one for aminoacylation and one for editing. The misactivated valine is translocated from the active site to the editing site, which sterically excludes the correctly activated isoleucine. The single editing site contains two valyl binding pockets, one specific for each substrate (Val-AMP or Val-tRNA(Ile)).</text>
</comment>
<comment type="similarity">
    <text evidence="1">Belongs to the class-I aminoacyl-tRNA synthetase family. IleS type 2 subfamily.</text>
</comment>
<keyword id="KW-0030">Aminoacyl-tRNA synthetase</keyword>
<keyword id="KW-0067">ATP-binding</keyword>
<keyword id="KW-0963">Cytoplasm</keyword>
<keyword id="KW-0436">Ligase</keyword>
<keyword id="KW-0479">Metal-binding</keyword>
<keyword id="KW-0547">Nucleotide-binding</keyword>
<keyword id="KW-0648">Protein biosynthesis</keyword>
<keyword id="KW-0862">Zinc</keyword>
<reference key="1">
    <citation type="journal article" date="2005" name="Nat. Biotechnol.">
        <title>Genome sequence of the chlorinated compound-respiring bacterium Dehalococcoides species strain CBDB1.</title>
        <authorList>
            <person name="Kube M."/>
            <person name="Beck A."/>
            <person name="Zinder S.H."/>
            <person name="Kuhl H."/>
            <person name="Reinhardt R."/>
            <person name="Adrian L."/>
        </authorList>
    </citation>
    <scope>NUCLEOTIDE SEQUENCE [LARGE SCALE GENOMIC DNA]</scope>
    <source>
        <strain>CBDB1</strain>
    </source>
</reference>
<sequence length="1014" mass="116166">MFKAVNPRQNFPQMEEEILKIWQDKGIFKKSIENRRDGKRFTLYEGPPTANGRPGIHHVLSRVFKDVIPRYKVMKGYYAPRIGGWDTHGLPVELEVEKELGFTSKNDIEKYGIAEFNTRCRSSVFKYVSEWNKLTERIAYWVDLDNAYITMDNKYIESGWWALKQMWDKGLVYQGHRVTPHCPRCGTSLSSHEVAQGYKDNTEDPSVFVKFEINHESLAQTGLGQKWVNPSDKPLYLLAWTTTPWTLPANTALAVSATDEYAILDMADYYMVLAKPRLSSLKLTENPIVGECLGSDLKGLTYKPLFDPREFGISVKNMQDNSEIDALEPLSYPVITTSYVSMDDGTGIVHTAPAYGELDYESGVKYGLKFVHHVDLQGRITGNYPFAGKFVKEADKDISRNLKERGLMFRNERMHHTYPFCWRCDSPLIYYAKQSWYIRTTAVRDELIKGNQQINWYPEHIKDGRFGDWLENNIDWAFSRERYWGTPVPIWRCEKCGQTECVGGIDELKAKPNFKGMQEKLDIHRPYADEWTYDCAKCGGNMKRVTEVMDCWYDSGAMPVAQYHYPFEPESRTIASDGRFPADYICEAVDQTRGWFYSLHAISTLIFGRPCYQNVICLGHILDERGEKMSKSKNNVIQPAAVLDKYGADAVRWYFYTAAPPGNARRFSEKLVGEVTRQFLLMLWNIYSFFVTYANIDNFTPSEKYLAGEVPELDRWILSELNQLVLDVDKGLDNYDPTQAGRRIEDFVGYLSNWYVRRSRRRFWKSENDADKLSAYQALYTCLVTLSKLLAPFTPFVAEELYQNLVLLVDQSALESVHLTDFPVADKALIDEQLDNEIRLVMKVSSMGRSARSKAALKVRQPLAEVRVVLSSPAERTGLMRLAEQVLEELNVKALVAEEPGTAIPQENYVASTEGAYTVAVYTGLSPELLAEGSAREIVHRLQTMRKSAEFEIADYINTHYQADEYLESVIRTHAEYIKKETLSNQIVNGNAPEGAYTESLDIDGHPLSLWVVR</sequence>
<evidence type="ECO:0000255" key="1">
    <source>
        <dbReference type="HAMAP-Rule" id="MF_02003"/>
    </source>
</evidence>